<protein>
    <recommendedName>
        <fullName evidence="3">Small ribosomal subunit protein bS6m</fullName>
    </recommendedName>
    <alternativeName>
        <fullName>28S ribosomal protein S6, mitochondrial</fullName>
        <shortName>MRP-S6</shortName>
        <shortName>S6mt</shortName>
    </alternativeName>
</protein>
<feature type="initiator methionine" description="Removed" evidence="1">
    <location>
        <position position="1"/>
    </location>
</feature>
<feature type="chain" id="PRO_0000239986" description="Small ribosomal subunit protein bS6m">
    <location>
        <begin position="2"/>
        <end position="121"/>
    </location>
</feature>
<proteinExistence type="evidence at transcript level"/>
<gene>
    <name type="primary">MRPS6</name>
    <name type="ORF">RCJMB04_25m4</name>
</gene>
<sequence>MPRYELALILKAMQRPETAAVLKRTVEALMERGAIVRNLENLGERALPYKISKHNHRHRRGGYFLVDLEGPPSIVSTMMDHLGRDIDIIRRAFIKYPVSKTEECSGIVPVNCEDKLIPKKK</sequence>
<dbReference type="EMBL" id="AJ720792">
    <property type="protein sequence ID" value="CAG32451.1"/>
    <property type="molecule type" value="mRNA"/>
</dbReference>
<dbReference type="RefSeq" id="NP_001026657.3">
    <property type="nucleotide sequence ID" value="NM_001031486.3"/>
</dbReference>
<dbReference type="SMR" id="Q5ZIJ2"/>
<dbReference type="FunCoup" id="Q5ZIJ2">
    <property type="interactions" value="344"/>
</dbReference>
<dbReference type="STRING" id="9031.ENSGALP00000040641"/>
<dbReference type="PaxDb" id="9031-ENSGALP00000040641"/>
<dbReference type="GeneID" id="427978"/>
<dbReference type="KEGG" id="gga:427978"/>
<dbReference type="CTD" id="64968"/>
<dbReference type="VEuPathDB" id="HostDB:geneid_427978"/>
<dbReference type="eggNOG" id="KOG4708">
    <property type="taxonomic scope" value="Eukaryota"/>
</dbReference>
<dbReference type="InParanoid" id="Q5ZIJ2"/>
<dbReference type="OMA" id="ATHFTIT"/>
<dbReference type="PhylomeDB" id="Q5ZIJ2"/>
<dbReference type="PRO" id="PR:Q5ZIJ2"/>
<dbReference type="Proteomes" id="UP000000539">
    <property type="component" value="Unassembled WGS sequence"/>
</dbReference>
<dbReference type="GO" id="GO:0005763">
    <property type="term" value="C:mitochondrial small ribosomal subunit"/>
    <property type="evidence" value="ECO:0000250"/>
    <property type="project" value="UniProtKB"/>
</dbReference>
<dbReference type="GO" id="GO:0070181">
    <property type="term" value="F:small ribosomal subunit rRNA binding"/>
    <property type="evidence" value="ECO:0000318"/>
    <property type="project" value="GO_Central"/>
</dbReference>
<dbReference type="GO" id="GO:0003735">
    <property type="term" value="F:structural constituent of ribosome"/>
    <property type="evidence" value="ECO:0000318"/>
    <property type="project" value="GO_Central"/>
</dbReference>
<dbReference type="GO" id="GO:0006412">
    <property type="term" value="P:translation"/>
    <property type="evidence" value="ECO:0007669"/>
    <property type="project" value="InterPro"/>
</dbReference>
<dbReference type="CDD" id="cd15465">
    <property type="entry name" value="bS6_mito"/>
    <property type="match status" value="1"/>
</dbReference>
<dbReference type="FunFam" id="3.30.70.60:FF:000008">
    <property type="entry name" value="28S ribosomal protein S6, mitochondrial"/>
    <property type="match status" value="1"/>
</dbReference>
<dbReference type="Gene3D" id="3.30.70.60">
    <property type="match status" value="1"/>
</dbReference>
<dbReference type="InterPro" id="IPR000529">
    <property type="entry name" value="Ribosomal_bS6"/>
</dbReference>
<dbReference type="InterPro" id="IPR035980">
    <property type="entry name" value="Ribosomal_bS6_sf"/>
</dbReference>
<dbReference type="InterPro" id="IPR014717">
    <property type="entry name" value="Transl_elong_EF1B/ribsomal_bS6"/>
</dbReference>
<dbReference type="NCBIfam" id="TIGR00166">
    <property type="entry name" value="S6"/>
    <property type="match status" value="1"/>
</dbReference>
<dbReference type="PANTHER" id="PTHR21011">
    <property type="entry name" value="MITOCHONDRIAL 28S RIBOSOMAL PROTEIN S6"/>
    <property type="match status" value="1"/>
</dbReference>
<dbReference type="PANTHER" id="PTHR21011:SF1">
    <property type="entry name" value="SMALL RIBOSOMAL SUBUNIT PROTEIN BS6M"/>
    <property type="match status" value="1"/>
</dbReference>
<dbReference type="Pfam" id="PF01250">
    <property type="entry name" value="Ribosomal_S6"/>
    <property type="match status" value="1"/>
</dbReference>
<dbReference type="SUPFAM" id="SSF54995">
    <property type="entry name" value="Ribosomal protein S6"/>
    <property type="match status" value="1"/>
</dbReference>
<name>RT06_CHICK</name>
<comment type="subunit">
    <text evidence="2">Component of the mitochondrial ribosome small subunit (28S) which comprises a 12S rRNA and about 30 distinct proteins.</text>
</comment>
<comment type="subcellular location">
    <subcellularLocation>
        <location evidence="2">Mitochondrion</location>
    </subcellularLocation>
</comment>
<comment type="similarity">
    <text evidence="3">Belongs to the bacterial ribosomal protein bS6 family.</text>
</comment>
<reference key="1">
    <citation type="journal article" date="2005" name="Genome Biol.">
        <title>Full-length cDNAs from chicken bursal lymphocytes to facilitate gene function analysis.</title>
        <authorList>
            <person name="Caldwell R.B."/>
            <person name="Kierzek A.M."/>
            <person name="Arakawa H."/>
            <person name="Bezzubov Y."/>
            <person name="Zaim J."/>
            <person name="Fiedler P."/>
            <person name="Kutter S."/>
            <person name="Blagodatski A."/>
            <person name="Kostovska D."/>
            <person name="Koter M."/>
            <person name="Plachy J."/>
            <person name="Carninci P."/>
            <person name="Hayashizaki Y."/>
            <person name="Buerstedde J.-M."/>
        </authorList>
    </citation>
    <scope>NUCLEOTIDE SEQUENCE [LARGE SCALE MRNA]</scope>
    <source>
        <strain>CB</strain>
        <tissue>Bursa of Fabricius</tissue>
    </source>
</reference>
<accession>Q5ZIJ2</accession>
<keyword id="KW-0496">Mitochondrion</keyword>
<keyword id="KW-1185">Reference proteome</keyword>
<keyword id="KW-0687">Ribonucleoprotein</keyword>
<keyword id="KW-0689">Ribosomal protein</keyword>
<evidence type="ECO:0000250" key="1"/>
<evidence type="ECO:0000250" key="2">
    <source>
        <dbReference type="UniProtKB" id="P82932"/>
    </source>
</evidence>
<evidence type="ECO:0000305" key="3"/>
<organism>
    <name type="scientific">Gallus gallus</name>
    <name type="common">Chicken</name>
    <dbReference type="NCBI Taxonomy" id="9031"/>
    <lineage>
        <taxon>Eukaryota</taxon>
        <taxon>Metazoa</taxon>
        <taxon>Chordata</taxon>
        <taxon>Craniata</taxon>
        <taxon>Vertebrata</taxon>
        <taxon>Euteleostomi</taxon>
        <taxon>Archelosauria</taxon>
        <taxon>Archosauria</taxon>
        <taxon>Dinosauria</taxon>
        <taxon>Saurischia</taxon>
        <taxon>Theropoda</taxon>
        <taxon>Coelurosauria</taxon>
        <taxon>Aves</taxon>
        <taxon>Neognathae</taxon>
        <taxon>Galloanserae</taxon>
        <taxon>Galliformes</taxon>
        <taxon>Phasianidae</taxon>
        <taxon>Phasianinae</taxon>
        <taxon>Gallus</taxon>
    </lineage>
</organism>